<protein>
    <recommendedName>
        <fullName evidence="1">Dual-action ribosomal maturation protein DarP</fullName>
    </recommendedName>
    <alternativeName>
        <fullName evidence="1">Large ribosomal subunit assembly factor DarP</fullName>
    </alternativeName>
</protein>
<name>DARP_NITEC</name>
<sequence length="176" mass="20554">MTVPNHQQDISDSDLESRPSKTRLKQEMHALQVLGERLVELEPARITELDLPEKLTDALLEARRITSHGARRRQMQFIGKLMRAIDPVPVQEKLDAWQHSSLKHTAWLHQLERWRDRLISDEAAVTEFVQSYPQTDVRQLRTLLRNVEKEKLANKPPKSFRALFQLLRQIIPEISA</sequence>
<comment type="function">
    <text evidence="1">Member of a network of 50S ribosomal subunit biogenesis factors which assembles along the 30S-50S interface, preventing incorrect 23S rRNA structures from forming. Promotes peptidyl transferase center (PTC) maturation.</text>
</comment>
<comment type="subcellular location">
    <subcellularLocation>
        <location evidence="1">Cytoplasm</location>
    </subcellularLocation>
    <text evidence="1">Associates with late stage pre-50S ribosomal subunits.</text>
</comment>
<comment type="similarity">
    <text evidence="1">Belongs to the DarP family.</text>
</comment>
<feature type="chain" id="PRO_1000046801" description="Dual-action ribosomal maturation protein DarP">
    <location>
        <begin position="1"/>
        <end position="176"/>
    </location>
</feature>
<feature type="region of interest" description="Disordered" evidence="2">
    <location>
        <begin position="1"/>
        <end position="22"/>
    </location>
</feature>
<feature type="compositionally biased region" description="Polar residues" evidence="2">
    <location>
        <begin position="1"/>
        <end position="10"/>
    </location>
</feature>
<keyword id="KW-0963">Cytoplasm</keyword>
<keyword id="KW-0690">Ribosome biogenesis</keyword>
<keyword id="KW-0694">RNA-binding</keyword>
<keyword id="KW-0699">rRNA-binding</keyword>
<dbReference type="EMBL" id="CP000450">
    <property type="protein sequence ID" value="ABI58961.1"/>
    <property type="molecule type" value="Genomic_DNA"/>
</dbReference>
<dbReference type="RefSeq" id="WP_011633786.1">
    <property type="nucleotide sequence ID" value="NC_008344.1"/>
</dbReference>
<dbReference type="SMR" id="Q0AI71"/>
<dbReference type="STRING" id="335283.Neut_0689"/>
<dbReference type="KEGG" id="net:Neut_0689"/>
<dbReference type="eggNOG" id="COG3028">
    <property type="taxonomic scope" value="Bacteria"/>
</dbReference>
<dbReference type="HOGENOM" id="CLU_106757_1_0_4"/>
<dbReference type="OrthoDB" id="5293604at2"/>
<dbReference type="Proteomes" id="UP000001966">
    <property type="component" value="Chromosome"/>
</dbReference>
<dbReference type="GO" id="GO:0005829">
    <property type="term" value="C:cytosol"/>
    <property type="evidence" value="ECO:0007669"/>
    <property type="project" value="TreeGrafter"/>
</dbReference>
<dbReference type="GO" id="GO:0043022">
    <property type="term" value="F:ribosome binding"/>
    <property type="evidence" value="ECO:0007669"/>
    <property type="project" value="UniProtKB-UniRule"/>
</dbReference>
<dbReference type="GO" id="GO:0019843">
    <property type="term" value="F:rRNA binding"/>
    <property type="evidence" value="ECO:0007669"/>
    <property type="project" value="UniProtKB-UniRule"/>
</dbReference>
<dbReference type="GO" id="GO:1902626">
    <property type="term" value="P:assembly of large subunit precursor of preribosome"/>
    <property type="evidence" value="ECO:0007669"/>
    <property type="project" value="UniProtKB-UniRule"/>
</dbReference>
<dbReference type="CDD" id="cd16331">
    <property type="entry name" value="YjgA-like"/>
    <property type="match status" value="1"/>
</dbReference>
<dbReference type="Gene3D" id="1.10.60.30">
    <property type="entry name" value="PSPTO4464-like domains"/>
    <property type="match status" value="2"/>
</dbReference>
<dbReference type="HAMAP" id="MF_00765">
    <property type="entry name" value="DarP"/>
    <property type="match status" value="1"/>
</dbReference>
<dbReference type="InterPro" id="IPR006839">
    <property type="entry name" value="DarP"/>
</dbReference>
<dbReference type="InterPro" id="IPR023153">
    <property type="entry name" value="DarP_sf"/>
</dbReference>
<dbReference type="NCBIfam" id="NF003593">
    <property type="entry name" value="PRK05255.1-1"/>
    <property type="match status" value="1"/>
</dbReference>
<dbReference type="PANTHER" id="PTHR38101">
    <property type="entry name" value="UPF0307 PROTEIN YJGA"/>
    <property type="match status" value="1"/>
</dbReference>
<dbReference type="PANTHER" id="PTHR38101:SF1">
    <property type="entry name" value="UPF0307 PROTEIN YJGA"/>
    <property type="match status" value="1"/>
</dbReference>
<dbReference type="Pfam" id="PF04751">
    <property type="entry name" value="DarP"/>
    <property type="match status" value="1"/>
</dbReference>
<dbReference type="PIRSF" id="PIRSF016183">
    <property type="entry name" value="UCP016183"/>
    <property type="match status" value="1"/>
</dbReference>
<dbReference type="SUPFAM" id="SSF158710">
    <property type="entry name" value="PSPTO4464-like"/>
    <property type="match status" value="1"/>
</dbReference>
<proteinExistence type="inferred from homology"/>
<reference key="1">
    <citation type="journal article" date="2007" name="Environ. Microbiol.">
        <title>Whole-genome analysis of the ammonia-oxidizing bacterium, Nitrosomonas eutropha C91: implications for niche adaptation.</title>
        <authorList>
            <person name="Stein L.Y."/>
            <person name="Arp D.J."/>
            <person name="Berube P.M."/>
            <person name="Chain P.S."/>
            <person name="Hauser L."/>
            <person name="Jetten M.S."/>
            <person name="Klotz M.G."/>
            <person name="Larimer F.W."/>
            <person name="Norton J.M."/>
            <person name="Op den Camp H.J.M."/>
            <person name="Shin M."/>
            <person name="Wei X."/>
        </authorList>
    </citation>
    <scope>NUCLEOTIDE SEQUENCE [LARGE SCALE GENOMIC DNA]</scope>
    <source>
        <strain>DSM 101675 / C91 / Nm57</strain>
    </source>
</reference>
<organism>
    <name type="scientific">Nitrosomonas eutropha (strain DSM 101675 / C91 / Nm57)</name>
    <dbReference type="NCBI Taxonomy" id="335283"/>
    <lineage>
        <taxon>Bacteria</taxon>
        <taxon>Pseudomonadati</taxon>
        <taxon>Pseudomonadota</taxon>
        <taxon>Betaproteobacteria</taxon>
        <taxon>Nitrosomonadales</taxon>
        <taxon>Nitrosomonadaceae</taxon>
        <taxon>Nitrosomonas</taxon>
    </lineage>
</organism>
<evidence type="ECO:0000255" key="1">
    <source>
        <dbReference type="HAMAP-Rule" id="MF_00765"/>
    </source>
</evidence>
<evidence type="ECO:0000256" key="2">
    <source>
        <dbReference type="SAM" id="MobiDB-lite"/>
    </source>
</evidence>
<gene>
    <name evidence="1" type="primary">darP</name>
    <name type="ordered locus">Neut_0689</name>
</gene>
<accession>Q0AI71</accession>